<evidence type="ECO:0000250" key="1">
    <source>
        <dbReference type="UniProtKB" id="Q02229"/>
    </source>
</evidence>
<evidence type="ECO:0000255" key="2"/>
<evidence type="ECO:0000256" key="3">
    <source>
        <dbReference type="SAM" id="MobiDB-lite"/>
    </source>
</evidence>
<evidence type="ECO:0000269" key="4">
    <source>
    </source>
</evidence>
<evidence type="ECO:0000269" key="5">
    <source>
    </source>
</evidence>
<evidence type="ECO:0000269" key="6">
    <source>
    </source>
</evidence>
<evidence type="ECO:0000269" key="7">
    <source>
    </source>
</evidence>
<evidence type="ECO:0000303" key="8">
    <source>
    </source>
</evidence>
<evidence type="ECO:0000303" key="9">
    <source>
    </source>
</evidence>
<evidence type="ECO:0000305" key="10"/>
<evidence type="ECO:0000305" key="11">
    <source>
    </source>
</evidence>
<evidence type="ECO:0000312" key="12">
    <source>
        <dbReference type="EMBL" id="AAG20894.1"/>
    </source>
</evidence>
<evidence type="ECO:0000312" key="13">
    <source>
        <dbReference type="EMBL" id="CAA64343.1"/>
    </source>
</evidence>
<protein>
    <recommendedName>
        <fullName>Protein GvpD2</fullName>
    </recommendedName>
    <alternativeName>
        <fullName evidence="9">cGvpD</fullName>
    </alternativeName>
</protein>
<reference key="1">
    <citation type="journal article" date="1992" name="J. Mol. Biol.">
        <title>Three different but related gene clusters encoding gas vesicles in halophilic archaea.</title>
        <authorList>
            <person name="Englert C."/>
            <person name="Krueger K."/>
            <person name="Offner S."/>
            <person name="Pfeifer F."/>
        </authorList>
    </citation>
    <scope>NUCLEOTIDE SEQUENCE [GENOMIC DNA]</scope>
    <scope>GAS VESICLE GENE CLUSTER</scope>
    <source>
        <strain>NRC-817</strain>
    </source>
</reference>
<reference evidence="13" key="2">
    <citation type="journal article" date="1996" name="J. Bacteriol.">
        <title>Transcript analysis of the c-vac region and differential synthesis of the two regulatory gas vesicle proteins GvpD and GvpE in Halobacterium salinarium PHH4.</title>
        <authorList>
            <person name="Krueger K."/>
            <person name="Pfeifer F."/>
        </authorList>
    </citation>
    <scope>NUCLEOTIDE SEQUENCE [GENOMIC DNA]</scope>
    <scope>INDUCTION</scope>
    <source>
        <strain>PHH1</strain>
        <strain>PHH1 /PHH4</strain>
    </source>
</reference>
<reference evidence="12" key="3">
    <citation type="journal article" date="2000" name="Proc. Natl. Acad. Sci. U.S.A.">
        <title>Genome sequence of Halobacterium species NRC-1.</title>
        <authorList>
            <person name="Ng W.V."/>
            <person name="Kennedy S.P."/>
            <person name="Mahairas G.G."/>
            <person name="Berquist B."/>
            <person name="Pan M."/>
            <person name="Shukla H.D."/>
            <person name="Lasky S.R."/>
            <person name="Baliga N.S."/>
            <person name="Thorsson V."/>
            <person name="Sbrogna J."/>
            <person name="Swartzell S."/>
            <person name="Weir D."/>
            <person name="Hall J."/>
            <person name="Dahl T.A."/>
            <person name="Welti R."/>
            <person name="Goo Y.A."/>
            <person name="Leithauser B."/>
            <person name="Keller K."/>
            <person name="Cruz R."/>
            <person name="Danson M.J."/>
            <person name="Hough D.W."/>
            <person name="Maddocks D.G."/>
            <person name="Jablonski P.E."/>
            <person name="Krebs M.P."/>
            <person name="Angevine C.M."/>
            <person name="Dale H."/>
            <person name="Isenbarger T.A."/>
            <person name="Peck R.F."/>
            <person name="Pohlschroder M."/>
            <person name="Spudich J.L."/>
            <person name="Jung K.-H."/>
            <person name="Alam M."/>
            <person name="Freitas T."/>
            <person name="Hou S."/>
            <person name="Daniels C.J."/>
            <person name="Dennis P.P."/>
            <person name="Omer A.D."/>
            <person name="Ebhardt H."/>
            <person name="Lowe T.M."/>
            <person name="Liang P."/>
            <person name="Riley M."/>
            <person name="Hood L."/>
            <person name="DasSarma S."/>
        </authorList>
    </citation>
    <scope>NUCLEOTIDE SEQUENCE [LARGE SCALE GENOMIC DNA]</scope>
    <source>
        <strain>ATCC 700922 / JCM 11081 / NRC-1</strain>
        <plasmid>pNRC200</plasmid>
    </source>
</reference>
<reference key="4">
    <citation type="journal article" date="1997" name="Microbiology">
        <title>Growth competition between Halobacterium salinarium strain PHH1 and mutants affected in gas vesicle synthesis.</title>
        <authorList>
            <person name="Beard S.J."/>
            <person name="Hayes P.K."/>
            <person name="Walsby A.E."/>
        </authorList>
    </citation>
    <scope>FUNCTION IN BUOYANCY</scope>
    <scope>POSSIBLE INDUCTION BY OXYGEN LIMITATION</scope>
    <source>
        <strain>PHH1</strain>
    </source>
</reference>
<reference key="5">
    <citation type="journal article" date="1998" name="Microbiology">
        <title>Structural characteristics of halobacterial gas vesicles.</title>
        <authorList>
            <person name="Offner S."/>
            <person name="Ziese U."/>
            <person name="Wanner G."/>
            <person name="Typke D."/>
            <person name="Pfeifer F."/>
        </authorList>
    </citation>
    <scope>DISRUPTION PHENOTYPE</scope>
    <source>
        <strain>PHH1</strain>
    </source>
</reference>
<reference key="6">
    <citation type="journal article" date="2007" name="Microbiology">
        <title>GvpD-induced breakdown of the transcriptional activator GvpE of halophilic archaea requires a functional p-loop and an arginine-rich region of GvpD.</title>
        <authorList>
            <person name="Scheuch S."/>
            <person name="Pfeifer F."/>
        </authorList>
    </citation>
    <scope>INTERACTION WITH GVPE</scope>
    <source>
        <strain>PHH1</strain>
    </source>
</reference>
<geneLocation type="plasmid">
    <name>pNRC200</name>
</geneLocation>
<proteinExistence type="evidence at protein level"/>
<organism>
    <name type="scientific">Halobacterium salinarum (strain ATCC 700922 / JCM 11081 / NRC-1)</name>
    <name type="common">Halobacterium halobium</name>
    <dbReference type="NCBI Taxonomy" id="64091"/>
    <lineage>
        <taxon>Archaea</taxon>
        <taxon>Methanobacteriati</taxon>
        <taxon>Methanobacteriota</taxon>
        <taxon>Stenosarchaea group</taxon>
        <taxon>Halobacteria</taxon>
        <taxon>Halobacteriales</taxon>
        <taxon>Halobacteriaceae</taxon>
        <taxon>Halobacterium</taxon>
        <taxon>Halobacterium salinarum NRC-34001</taxon>
    </lineage>
</organism>
<accession>Q9HHT2</accession>
<accession>P33958</accession>
<sequence length="492" mass="53929">MSARTPLHAPPSHEGIAHFPREIRRFFTGEPGQTLLVNGAPGTGKTLFTIRGLDVLSREGDVLYVSTRVDQETVYEMYVEGHAALDRTALLDLSQDPFGLPMDVDVPFETLNLESLLSWVDAISAPATKLTLAFDSWRLVYEYLAARHDSPPSIETVTNQLVALARDAGVRLVLVSETATQSPLEYIVDGVVTLHVTDNERGRTRRQLRLEKLRGVRIENRLQPFTLADGQFKAITPVELSTTQSVPDEATWEPLANPTARFSTGIRDLDTILSGGFNRGGVVHLDLGADLSRDAWSVLVLPAIRNFLANEMGVAVVPPKEGSPGLLHNDLSAVLSKAVFDTHCHVFETYAGPTRDHDDAVDPDRLPGHDTTPTEHGTLSYDPYIARAERIREHSDGPLLHVISMDTAYHAFETRLGDFANYVALHNDASVLITKPGTALRTRADRVADMHFRLECAGDAIVLYGETPLTPLLGIGVDQSGTIPEITLTEMV</sequence>
<comment type="function">
    <text evidence="1 5">Causes a decrease in the amount of GvpE protein (By similarity). Gas vesicles are hollow, gas filled proteinaceous nanostructures found in several microbial planktonic microorganisms. They allow positioning of halobacteria at the optimal depth for growth in the poorly aerated, shallow brine pools of their habitat (PubMed:33711860).</text>
</comment>
<comment type="function">
    <text evidence="7">Expression of 2 c-vac DNA fragments containing 2 divergently transcribed regions (gvpE-gvpF-gvpG-gvpH-gvpI-gvpJ-gvpK-gvpL-gvpM and gvpA-gvpC-gvpN-gvpO) allows H.volcanii to produce gas vesicles.</text>
</comment>
<comment type="subunit">
    <text evidence="11">Homodimer (Probable). Interacts with GvpE, also with GvpE from H.mediterranei (Probable).</text>
</comment>
<comment type="subcellular location">
    <subcellularLocation>
        <location evidence="10">Cytoplasm</location>
    </subcellularLocation>
    <text evidence="10">Probably not part of the mature gas vesicle.</text>
</comment>
<comment type="induction">
    <text evidence="5 6">In PHH4 (a deletion of the p-vac locus) detected from exponential to stationary phase, most protein seen in exponential phase (at protein level). Transcribed in all growth phases, maximal expression in mid-stationary phase. An unstable 6kb transcript able to cover gvpD-gvpE-gvpF-gvpG-gvpH-gvpI-gvpJ-gvpK-gvpL-gvpM is detected, as well as smaller transcripts (PubMed:8763925). Also expressed strain PHH1, which has an intact p-vac locus, from exponential to mid-stationary phase (at protein level) (PubMed:8763925). Gas vesicles appear earlier when grown in static culture, possibly due to O(2)-limitation (PubMed:33711860).</text>
</comment>
<comment type="disruption phenotype">
    <text evidence="7">Transformed H.volcanii still makes gas vesicles.</text>
</comment>
<comment type="miscellaneous">
    <text evidence="4 6">Encoded in a 14-gene locus called c-vac which produces cylindrical gas vesicles only in the stationary growth phase.</text>
</comment>
<comment type="similarity">
    <text evidence="10">Belongs to the gas vesicle GvpD family.</text>
</comment>
<keyword id="KW-0067">ATP-binding</keyword>
<keyword id="KW-0963">Cytoplasm</keyword>
<keyword id="KW-0547">Nucleotide-binding</keyword>
<keyword id="KW-0614">Plasmid</keyword>
<keyword id="KW-1185">Reference proteome</keyword>
<dbReference type="EMBL" id="X64730">
    <property type="protein sequence ID" value="CAA45992.1"/>
    <property type="molecule type" value="Genomic_DNA"/>
</dbReference>
<dbReference type="EMBL" id="X94688">
    <property type="protein sequence ID" value="CAA64343.1"/>
    <property type="molecule type" value="Genomic_DNA"/>
</dbReference>
<dbReference type="EMBL" id="AE004438">
    <property type="protein sequence ID" value="AAG20894.1"/>
    <property type="molecule type" value="Genomic_DNA"/>
</dbReference>
<dbReference type="RefSeq" id="WP_010904107.1">
    <property type="nucleotide sequence ID" value="NZ_BK010831.1"/>
</dbReference>
<dbReference type="SMR" id="Q9HHT2"/>
<dbReference type="GeneID" id="89343665"/>
<dbReference type="KEGG" id="hal:VNG_6240G"/>
<dbReference type="PATRIC" id="fig|64091.14.peg.2242"/>
<dbReference type="HOGENOM" id="CLU_047518_0_0_2"/>
<dbReference type="InParanoid" id="Q9HHT2"/>
<dbReference type="OrthoDB" id="49590at2157"/>
<dbReference type="PhylomeDB" id="Q9HHT2"/>
<dbReference type="Proteomes" id="UP000000554">
    <property type="component" value="Plasmid pNRC200"/>
</dbReference>
<dbReference type="GO" id="GO:0005737">
    <property type="term" value="C:cytoplasm"/>
    <property type="evidence" value="ECO:0007669"/>
    <property type="project" value="UniProtKB-SubCell"/>
</dbReference>
<dbReference type="GO" id="GO:0005524">
    <property type="term" value="F:ATP binding"/>
    <property type="evidence" value="ECO:0007669"/>
    <property type="project" value="UniProtKB-KW"/>
</dbReference>
<dbReference type="Gene3D" id="3.40.50.300">
    <property type="entry name" value="P-loop containing nucleotide triphosphate hydrolases"/>
    <property type="match status" value="1"/>
</dbReference>
<dbReference type="InterPro" id="IPR046777">
    <property type="entry name" value="GvpD_bR2"/>
</dbReference>
<dbReference type="InterPro" id="IPR009788">
    <property type="entry name" value="GvpD_P-loop"/>
</dbReference>
<dbReference type="InterPro" id="IPR027417">
    <property type="entry name" value="P-loop_NTPase"/>
</dbReference>
<dbReference type="PANTHER" id="PTHR43637:SF2">
    <property type="entry name" value="PROTEIN GVPD 1"/>
    <property type="match status" value="1"/>
</dbReference>
<dbReference type="PANTHER" id="PTHR43637">
    <property type="entry name" value="UPF0273 PROTEIN TM_0370"/>
    <property type="match status" value="1"/>
</dbReference>
<dbReference type="Pfam" id="PF20440">
    <property type="entry name" value="GvpD_bR2"/>
    <property type="match status" value="1"/>
</dbReference>
<dbReference type="Pfam" id="PF07088">
    <property type="entry name" value="GvpD_P-loop"/>
    <property type="match status" value="1"/>
</dbReference>
<dbReference type="SUPFAM" id="SSF52540">
    <property type="entry name" value="P-loop containing nucleoside triphosphate hydrolases"/>
    <property type="match status" value="1"/>
</dbReference>
<name>GVPD2_HALSA</name>
<gene>
    <name evidence="8 12" type="primary">gvpD2</name>
    <name evidence="8" type="synonym">c-gvpD</name>
    <name type="synonym">gvpD</name>
    <name evidence="12" type="ordered locus">VNG_6240G</name>
</gene>
<feature type="chain" id="PRO_0000182676" description="Protein GvpD2">
    <location>
        <begin position="1"/>
        <end position="492"/>
    </location>
</feature>
<feature type="region of interest" description="Disordered" evidence="3">
    <location>
        <begin position="355"/>
        <end position="379"/>
    </location>
</feature>
<feature type="compositionally biased region" description="Basic and acidic residues" evidence="3">
    <location>
        <begin position="355"/>
        <end position="368"/>
    </location>
</feature>
<feature type="binding site" evidence="2">
    <location>
        <begin position="39"/>
        <end position="46"/>
    </location>
    <ligand>
        <name>ATP</name>
        <dbReference type="ChEBI" id="CHEBI:30616"/>
    </ligand>
</feature>
<feature type="sequence conflict" description="In Ref. 2; CAA64343." evidence="10" ref="2">
    <original>ALARDA</original>
    <variation>GWARRR</variation>
    <location>
        <begin position="163"/>
        <end position="168"/>
    </location>
</feature>
<feature type="sequence conflict" description="In Ref. 2; CAA64343." evidence="10" ref="2">
    <original>L</original>
    <variation>V</variation>
    <location>
        <position position="469"/>
    </location>
</feature>